<sequence>MARDPSHLPRACRPPAIPVRVAEAALEISRTAIEEQLKICGHKKDADVFELFLSQKELTEVIDLSRFKKLKYLWLHHNKLHGITFLTRNYCLAELYLNNNAIFDIEGLHYLPSLHILLLHHNELINLDATVKELKGMLNLKTLTLYQNPLCQYNLYRLYIIYHLPGVELLDRNQVTEKERRSMITLFNHKKAHIVQSIAFRGKVDASWDPRSPFKQKPAQRVPSDFAFANNVDKTMFDDPEDAVFVRSMKRSAMAITSLNWDTVPTREEKYLEEKDTGPAQMLTITLR</sequence>
<protein>
    <recommendedName>
        <fullName>Leucine-rich repeat-containing protein 72</fullName>
    </recommendedName>
</protein>
<keyword id="KW-0433">Leucine-rich repeat</keyword>
<keyword id="KW-1185">Reference proteome</keyword>
<keyword id="KW-0677">Repeat</keyword>
<gene>
    <name type="primary">LRRC72</name>
</gene>
<name>LRC72_BOVIN</name>
<feature type="chain" id="PRO_0000346429" description="Leucine-rich repeat-containing protein 72">
    <location>
        <begin position="1"/>
        <end position="288"/>
    </location>
</feature>
<feature type="repeat" description="LRR 1">
    <location>
        <begin position="47"/>
        <end position="68"/>
    </location>
</feature>
<feature type="repeat" description="LRR 2">
    <location>
        <begin position="69"/>
        <end position="90"/>
    </location>
</feature>
<feature type="repeat" description="LRR 3">
    <location>
        <begin position="91"/>
        <end position="112"/>
    </location>
</feature>
<feature type="repeat" description="LRR 4">
    <location>
        <begin position="113"/>
        <end position="134"/>
    </location>
</feature>
<feature type="domain" description="LRRCT">
    <location>
        <begin position="148"/>
        <end position="186"/>
    </location>
</feature>
<reference key="1">
    <citation type="submission" date="2007-06" db="EMBL/GenBank/DDBJ databases">
        <authorList>
            <consortium name="NIH - Mammalian Gene Collection (MGC) project"/>
        </authorList>
    </citation>
    <scope>NUCLEOTIDE SEQUENCE [LARGE SCALE MRNA]</scope>
    <source>
        <strain>Crossbred X Angus</strain>
        <tissue>Liver</tissue>
    </source>
</reference>
<accession>A6H759</accession>
<proteinExistence type="evidence at transcript level"/>
<organism>
    <name type="scientific">Bos taurus</name>
    <name type="common">Bovine</name>
    <dbReference type="NCBI Taxonomy" id="9913"/>
    <lineage>
        <taxon>Eukaryota</taxon>
        <taxon>Metazoa</taxon>
        <taxon>Chordata</taxon>
        <taxon>Craniata</taxon>
        <taxon>Vertebrata</taxon>
        <taxon>Euteleostomi</taxon>
        <taxon>Mammalia</taxon>
        <taxon>Eutheria</taxon>
        <taxon>Laurasiatheria</taxon>
        <taxon>Artiodactyla</taxon>
        <taxon>Ruminantia</taxon>
        <taxon>Pecora</taxon>
        <taxon>Bovidae</taxon>
        <taxon>Bovinae</taxon>
        <taxon>Bos</taxon>
    </lineage>
</organism>
<dbReference type="EMBL" id="BC146123">
    <property type="protein sequence ID" value="AAI46124.1"/>
    <property type="molecule type" value="mRNA"/>
</dbReference>
<dbReference type="RefSeq" id="NP_001092659.1">
    <property type="nucleotide sequence ID" value="NM_001099189.1"/>
</dbReference>
<dbReference type="SMR" id="A6H759"/>
<dbReference type="STRING" id="9913.ENSBTAP00000045403"/>
<dbReference type="Ensembl" id="ENSBTAT00000048342.4">
    <property type="protein sequence ID" value="ENSBTAP00000045403.4"/>
    <property type="gene ID" value="ENSBTAG00000034091.4"/>
</dbReference>
<dbReference type="GeneID" id="783240"/>
<dbReference type="KEGG" id="bta:783240"/>
<dbReference type="CTD" id="100506049"/>
<dbReference type="VEuPathDB" id="HostDB:ENSBTAG00000034091"/>
<dbReference type="VGNC" id="VGNC:97282">
    <property type="gene designation" value="LRRC72"/>
</dbReference>
<dbReference type="eggNOG" id="KOG1644">
    <property type="taxonomic scope" value="Eukaryota"/>
</dbReference>
<dbReference type="GeneTree" id="ENSGT00940000153289"/>
<dbReference type="InParanoid" id="A6H759"/>
<dbReference type="OMA" id="DWGKMPT"/>
<dbReference type="OrthoDB" id="10251250at2759"/>
<dbReference type="Proteomes" id="UP000009136">
    <property type="component" value="Chromosome 4"/>
</dbReference>
<dbReference type="Bgee" id="ENSBTAG00000034091">
    <property type="expression patterns" value="Expressed in cardiac ventricle and 87 other cell types or tissues"/>
</dbReference>
<dbReference type="Gene3D" id="3.80.10.10">
    <property type="entry name" value="Ribonuclease Inhibitor"/>
    <property type="match status" value="1"/>
</dbReference>
<dbReference type="InterPro" id="IPR001611">
    <property type="entry name" value="Leu-rich_rpt"/>
</dbReference>
<dbReference type="InterPro" id="IPR042655">
    <property type="entry name" value="LRC72"/>
</dbReference>
<dbReference type="InterPro" id="IPR032675">
    <property type="entry name" value="LRR_dom_sf"/>
</dbReference>
<dbReference type="PANTHER" id="PTHR46759">
    <property type="entry name" value="LEUCINE-RICH REPEAT-CONTAINING PROTEIN 72"/>
    <property type="match status" value="1"/>
</dbReference>
<dbReference type="PANTHER" id="PTHR46759:SF1">
    <property type="entry name" value="LEUCINE-RICH REPEAT-CONTAINING PROTEIN 72"/>
    <property type="match status" value="1"/>
</dbReference>
<dbReference type="Pfam" id="PF14580">
    <property type="entry name" value="LRR_9"/>
    <property type="match status" value="1"/>
</dbReference>
<dbReference type="SUPFAM" id="SSF52058">
    <property type="entry name" value="L domain-like"/>
    <property type="match status" value="1"/>
</dbReference>
<dbReference type="PROSITE" id="PS51450">
    <property type="entry name" value="LRR"/>
    <property type="match status" value="4"/>
</dbReference>